<comment type="function">
    <text evidence="1">Catalyzes the reductive methylation of 2'-deoxyuridine-5'-monophosphate (dUMP) to 2'-deoxythymidine-5'-monophosphate (dTMP) while utilizing 5,10-methylenetetrahydrofolate (mTHF) as the methyl donor and reductant in the reaction, yielding dihydrofolate (DHF) as a by-product. This enzymatic reaction provides an intracellular de novo source of dTMP, an essential precursor for DNA biosynthesis.</text>
</comment>
<comment type="catalytic activity">
    <reaction evidence="1">
        <text>dUMP + (6R)-5,10-methylene-5,6,7,8-tetrahydrofolate = 7,8-dihydrofolate + dTMP</text>
        <dbReference type="Rhea" id="RHEA:12104"/>
        <dbReference type="ChEBI" id="CHEBI:15636"/>
        <dbReference type="ChEBI" id="CHEBI:57451"/>
        <dbReference type="ChEBI" id="CHEBI:63528"/>
        <dbReference type="ChEBI" id="CHEBI:246422"/>
        <dbReference type="EC" id="2.1.1.45"/>
    </reaction>
</comment>
<comment type="pathway">
    <text evidence="1">Pyrimidine metabolism; dTTP biosynthesis.</text>
</comment>
<comment type="subunit">
    <text evidence="1">Homodimer.</text>
</comment>
<comment type="subcellular location">
    <subcellularLocation>
        <location evidence="1">Cytoplasm</location>
    </subcellularLocation>
</comment>
<comment type="similarity">
    <text evidence="1">Belongs to the thymidylate synthase family. Bacterial-type ThyA subfamily.</text>
</comment>
<evidence type="ECO:0000255" key="1">
    <source>
        <dbReference type="HAMAP-Rule" id="MF_00008"/>
    </source>
</evidence>
<dbReference type="EC" id="2.1.1.45" evidence="1"/>
<dbReference type="EMBL" id="CP000514">
    <property type="protein sequence ID" value="ABM19507.1"/>
    <property type="molecule type" value="Genomic_DNA"/>
</dbReference>
<dbReference type="RefSeq" id="WP_011785891.1">
    <property type="nucleotide sequence ID" value="NC_008740.1"/>
</dbReference>
<dbReference type="SMR" id="A1U3D8"/>
<dbReference type="STRING" id="351348.Maqu_2432"/>
<dbReference type="KEGG" id="maq:Maqu_2432"/>
<dbReference type="eggNOG" id="COG0207">
    <property type="taxonomic scope" value="Bacteria"/>
</dbReference>
<dbReference type="HOGENOM" id="CLU_021669_0_0_6"/>
<dbReference type="OrthoDB" id="9774633at2"/>
<dbReference type="UniPathway" id="UPA00575"/>
<dbReference type="Proteomes" id="UP000000998">
    <property type="component" value="Chromosome"/>
</dbReference>
<dbReference type="GO" id="GO:0005829">
    <property type="term" value="C:cytosol"/>
    <property type="evidence" value="ECO:0007669"/>
    <property type="project" value="TreeGrafter"/>
</dbReference>
<dbReference type="GO" id="GO:0004799">
    <property type="term" value="F:thymidylate synthase activity"/>
    <property type="evidence" value="ECO:0007669"/>
    <property type="project" value="UniProtKB-UniRule"/>
</dbReference>
<dbReference type="GO" id="GO:0006231">
    <property type="term" value="P:dTMP biosynthetic process"/>
    <property type="evidence" value="ECO:0007669"/>
    <property type="project" value="UniProtKB-UniRule"/>
</dbReference>
<dbReference type="GO" id="GO:0006235">
    <property type="term" value="P:dTTP biosynthetic process"/>
    <property type="evidence" value="ECO:0007669"/>
    <property type="project" value="UniProtKB-UniRule"/>
</dbReference>
<dbReference type="GO" id="GO:0032259">
    <property type="term" value="P:methylation"/>
    <property type="evidence" value="ECO:0007669"/>
    <property type="project" value="UniProtKB-KW"/>
</dbReference>
<dbReference type="CDD" id="cd00351">
    <property type="entry name" value="TS_Pyrimidine_HMase"/>
    <property type="match status" value="1"/>
</dbReference>
<dbReference type="FunFam" id="3.30.572.10:FF:000013">
    <property type="entry name" value="Thymidylate synthase"/>
    <property type="match status" value="1"/>
</dbReference>
<dbReference type="Gene3D" id="3.30.572.10">
    <property type="entry name" value="Thymidylate synthase/dCMP hydroxymethylase domain"/>
    <property type="match status" value="1"/>
</dbReference>
<dbReference type="HAMAP" id="MF_00008">
    <property type="entry name" value="Thymidy_synth_bact"/>
    <property type="match status" value="1"/>
</dbReference>
<dbReference type="InterPro" id="IPR045097">
    <property type="entry name" value="Thymidate_synth/dCMP_Mease"/>
</dbReference>
<dbReference type="InterPro" id="IPR023451">
    <property type="entry name" value="Thymidate_synth/dCMP_Mease_dom"/>
</dbReference>
<dbReference type="InterPro" id="IPR036926">
    <property type="entry name" value="Thymidate_synth/dCMP_Mease_sf"/>
</dbReference>
<dbReference type="InterPro" id="IPR000398">
    <property type="entry name" value="Thymidylate_synthase"/>
</dbReference>
<dbReference type="NCBIfam" id="NF002497">
    <property type="entry name" value="PRK01827.1-3"/>
    <property type="match status" value="1"/>
</dbReference>
<dbReference type="NCBIfam" id="NF002499">
    <property type="entry name" value="PRK01827.1-5"/>
    <property type="match status" value="1"/>
</dbReference>
<dbReference type="NCBIfam" id="TIGR03284">
    <property type="entry name" value="thym_sym"/>
    <property type="match status" value="2"/>
</dbReference>
<dbReference type="PANTHER" id="PTHR11548:SF9">
    <property type="entry name" value="THYMIDYLATE SYNTHASE"/>
    <property type="match status" value="1"/>
</dbReference>
<dbReference type="PANTHER" id="PTHR11548">
    <property type="entry name" value="THYMIDYLATE SYNTHASE 1"/>
    <property type="match status" value="1"/>
</dbReference>
<dbReference type="Pfam" id="PF00303">
    <property type="entry name" value="Thymidylat_synt"/>
    <property type="match status" value="1"/>
</dbReference>
<dbReference type="PRINTS" id="PR00108">
    <property type="entry name" value="THYMDSNTHASE"/>
</dbReference>
<dbReference type="SUPFAM" id="SSF55831">
    <property type="entry name" value="Thymidylate synthase/dCMP hydroxymethylase"/>
    <property type="match status" value="1"/>
</dbReference>
<feature type="chain" id="PRO_1000000623" description="Thymidylate synthase">
    <location>
        <begin position="1"/>
        <end position="279"/>
    </location>
</feature>
<feature type="active site" description="Nucleophile" evidence="1">
    <location>
        <position position="159"/>
    </location>
</feature>
<feature type="binding site" description="in other chain" evidence="1">
    <location>
        <position position="21"/>
    </location>
    <ligand>
        <name>dUMP</name>
        <dbReference type="ChEBI" id="CHEBI:246422"/>
        <note>ligand shared between dimeric partners</note>
    </ligand>
</feature>
<feature type="binding site" evidence="1">
    <location>
        <position position="51"/>
    </location>
    <ligand>
        <name>(6R)-5,10-methylene-5,6,7,8-tetrahydrofolate</name>
        <dbReference type="ChEBI" id="CHEBI:15636"/>
    </ligand>
</feature>
<feature type="binding site" evidence="1">
    <location>
        <begin position="126"/>
        <end position="127"/>
    </location>
    <ligand>
        <name>dUMP</name>
        <dbReference type="ChEBI" id="CHEBI:246422"/>
        <note>ligand shared between dimeric partners</note>
    </ligand>
</feature>
<feature type="binding site" description="in other chain" evidence="1">
    <location>
        <begin position="179"/>
        <end position="182"/>
    </location>
    <ligand>
        <name>dUMP</name>
        <dbReference type="ChEBI" id="CHEBI:246422"/>
        <note>ligand shared between dimeric partners</note>
    </ligand>
</feature>
<feature type="binding site" evidence="1">
    <location>
        <position position="182"/>
    </location>
    <ligand>
        <name>(6R)-5,10-methylene-5,6,7,8-tetrahydrofolate</name>
        <dbReference type="ChEBI" id="CHEBI:15636"/>
    </ligand>
</feature>
<feature type="binding site" description="in other chain" evidence="1">
    <location>
        <position position="190"/>
    </location>
    <ligand>
        <name>dUMP</name>
        <dbReference type="ChEBI" id="CHEBI:246422"/>
        <note>ligand shared between dimeric partners</note>
    </ligand>
</feature>
<feature type="binding site" description="in other chain" evidence="1">
    <location>
        <begin position="220"/>
        <end position="222"/>
    </location>
    <ligand>
        <name>dUMP</name>
        <dbReference type="ChEBI" id="CHEBI:246422"/>
        <note>ligand shared between dimeric partners</note>
    </ligand>
</feature>
<feature type="binding site" evidence="1">
    <location>
        <position position="278"/>
    </location>
    <ligand>
        <name>(6R)-5,10-methylene-5,6,7,8-tetrahydrofolate</name>
        <dbReference type="ChEBI" id="CHEBI:15636"/>
    </ligand>
</feature>
<protein>
    <recommendedName>
        <fullName evidence="1">Thymidylate synthase</fullName>
        <shortName evidence="1">TS</shortName>
        <shortName evidence="1">TSase</shortName>
        <ecNumber evidence="1">2.1.1.45</ecNumber>
    </recommendedName>
</protein>
<gene>
    <name evidence="1" type="primary">thyA</name>
    <name type="ordered locus">Maqu_2432</name>
</gene>
<keyword id="KW-0963">Cytoplasm</keyword>
<keyword id="KW-0489">Methyltransferase</keyword>
<keyword id="KW-0545">Nucleotide biosynthesis</keyword>
<keyword id="KW-0808">Transferase</keyword>
<accession>A1U3D8</accession>
<reference key="1">
    <citation type="journal article" date="2011" name="Appl. Environ. Microbiol.">
        <title>Genomic potential of Marinobacter aquaeolei, a biogeochemical 'opportunitroph'.</title>
        <authorList>
            <person name="Singer E."/>
            <person name="Webb E.A."/>
            <person name="Nelson W.C."/>
            <person name="Heidelberg J.F."/>
            <person name="Ivanova N."/>
            <person name="Pati A."/>
            <person name="Edwards K.J."/>
        </authorList>
    </citation>
    <scope>NUCLEOTIDE SEQUENCE [LARGE SCALE GENOMIC DNA]</scope>
    <source>
        <strain>ATCC 700491 / DSM 11845 / VT8</strain>
    </source>
</reference>
<name>TYSY_MARN8</name>
<organism>
    <name type="scientific">Marinobacter nauticus (strain ATCC 700491 / DSM 11845 / VT8)</name>
    <name type="common">Marinobacter aquaeolei</name>
    <dbReference type="NCBI Taxonomy" id="351348"/>
    <lineage>
        <taxon>Bacteria</taxon>
        <taxon>Pseudomonadati</taxon>
        <taxon>Pseudomonadota</taxon>
        <taxon>Gammaproteobacteria</taxon>
        <taxon>Pseudomonadales</taxon>
        <taxon>Marinobacteraceae</taxon>
        <taxon>Marinobacter</taxon>
    </lineage>
</organism>
<proteinExistence type="inferred from homology"/>
<sequence>MKAYLDLMQDVVDNGFDKGDRTGVGTRSVFGRQMRFNLQDGFPLVTTKKVHLRSIIYELLWFLKGSTDNTWLAERKVSIWNEWALENGDLGPIYGKQWRSWQCHDGRVIDQISEVIEQIRTKPNSRRLIVSAWNPAELPDESISPQDNVREGRMALAPCHCLFQFYVADGKLSCQLYQRSADLFLGVPFNIASYALLTHMIAQQCDLDVGEFVHTFGDCHLYRNHLTDDIVFEQLRREPRALPKLVIKRKPESIFGYELEDFEFEGYDPSPVIKAPIAI</sequence>